<sequence length="64" mass="6990">EWCGSNADCGDGQCCTGGSFNRHCQSLADDGTPCQKPNDYNEYKFGCPCKEGLICSPINYCQKK</sequence>
<protein>
    <recommendedName>
        <fullName>U9-ctenitoxin-Pr1a</fullName>
        <shortName>U9-CNTX-Pr1a</shortName>
    </recommendedName>
    <alternativeName>
        <fullName>Non-toxic venom protein PRTx16C0</fullName>
    </alternativeName>
</protein>
<comment type="function">
    <text evidence="2 3">Non-toxic to mice and insects.</text>
</comment>
<comment type="subcellular location">
    <subcellularLocation>
        <location evidence="2 3">Secreted</location>
    </subcellularLocation>
</comment>
<comment type="tissue specificity">
    <text evidence="2 3">Expressed by the venom gland.</text>
</comment>
<comment type="mass spectrometry" mass="6981.39" method="Electrospray" evidence="2 3"/>
<comment type="similarity">
    <text>Belongs to the u-CNTX family.</text>
</comment>
<evidence type="ECO:0000250" key="1"/>
<evidence type="ECO:0000269" key="2">
    <source ref="1"/>
</evidence>
<evidence type="ECO:0000305" key="3"/>
<keyword id="KW-0903">Direct protein sequencing</keyword>
<keyword id="KW-1015">Disulfide bond</keyword>
<keyword id="KW-0964">Secreted</keyword>
<feature type="chain" id="PRO_0000087649" description="U9-ctenitoxin-Pr1a">
    <location>
        <begin position="1"/>
        <end position="64"/>
    </location>
</feature>
<feature type="disulfide bond" evidence="1">
    <location>
        <begin position="3"/>
        <end position="15"/>
    </location>
</feature>
<feature type="disulfide bond" evidence="1">
    <location>
        <begin position="9"/>
        <end position="24"/>
    </location>
</feature>
<feature type="disulfide bond" evidence="1">
    <location>
        <begin position="14"/>
        <end position="47"/>
    </location>
</feature>
<feature type="disulfide bond" evidence="1">
    <location>
        <begin position="34"/>
        <end position="55"/>
    </location>
</feature>
<feature type="disulfide bond" evidence="1">
    <location>
        <begin position="49"/>
        <end position="61"/>
    </location>
</feature>
<name>TX16_PHORI</name>
<organism evidence="3">
    <name type="scientific">Phoneutria reidyi</name>
    <name type="common">Brazilian Amazonian armed spider</name>
    <name type="synonym">Ctenus reidyi</name>
    <dbReference type="NCBI Taxonomy" id="272752"/>
    <lineage>
        <taxon>Eukaryota</taxon>
        <taxon>Metazoa</taxon>
        <taxon>Ecdysozoa</taxon>
        <taxon>Arthropoda</taxon>
        <taxon>Chelicerata</taxon>
        <taxon>Arachnida</taxon>
        <taxon>Araneae</taxon>
        <taxon>Araneomorphae</taxon>
        <taxon>Entelegynae</taxon>
        <taxon>Lycosoidea</taxon>
        <taxon>Ctenidae</taxon>
        <taxon>Phoneutria</taxon>
    </lineage>
</organism>
<dbReference type="SMR" id="P83893"/>
<dbReference type="ArachnoServer" id="AS000214">
    <property type="toxin name" value="U9-ctenitoxin-Pr1a"/>
</dbReference>
<dbReference type="GO" id="GO:0005576">
    <property type="term" value="C:extracellular region"/>
    <property type="evidence" value="ECO:0007669"/>
    <property type="project" value="UniProtKB-SubCell"/>
</dbReference>
<dbReference type="Gene3D" id="2.10.80.10">
    <property type="entry name" value="Lipase, subunit A"/>
    <property type="match status" value="1"/>
</dbReference>
<proteinExistence type="evidence at protein level"/>
<reference evidence="3" key="1">
    <citation type="submission" date="2004-04" db="UniProtKB">
        <title>Non-toxic protein PRTx16C0 from venom of Brazilian Amazonian armed spider Phoneutria reidyi has sequence similarities with toxins from other spiders.</title>
        <authorList>
            <person name="Richardson M."/>
            <person name="Pimenta A.M.C."/>
            <person name="Bemquerer M.P."/>
            <person name="Santoro M.M."/>
            <person name="Figueiredo S.G."/>
            <person name="Cordeiro M.N."/>
        </authorList>
    </citation>
    <scope>PROTEIN SEQUENCE</scope>
    <scope>FUNCTION</scope>
    <scope>SUBCELLULAR LOCATION</scope>
    <scope>TISSUE SPECIFICITY</scope>
    <scope>MASS SPECTROMETRY</scope>
    <source>
        <tissue>Venom</tissue>
    </source>
</reference>
<accession>P83893</accession>